<reference key="1">
    <citation type="submission" date="2002-02" db="EMBL/GenBank/DDBJ databases">
        <title>Insect toxin from Mesobuthus tamulus.</title>
        <authorList>
            <person name="Newton K.A."/>
            <person name="Armugam A."/>
            <person name="Strong P.N."/>
            <person name="Jeyaseelan K."/>
        </authorList>
    </citation>
    <scope>NUCLEOTIDE SEQUENCE [MRNA]</scope>
    <source>
        <tissue>Venom gland</tissue>
    </source>
</reference>
<reference key="2">
    <citation type="journal article" date="2001" name="BMC Biochem.">
        <title>Isolation and characterization of a novel lepidopteran-selective toxin from the venom of South Indian red scorpion, Mesobuthus tamulus.</title>
        <authorList>
            <person name="Wudayagiri R."/>
            <person name="Inceoglu A.B."/>
            <person name="Herrmann R."/>
            <person name="Derbel M."/>
            <person name="Choudary P.V."/>
            <person name="Hammock B.D."/>
        </authorList>
    </citation>
    <scope>PROTEIN SEQUENCE OF 25-61</scope>
    <scope>FUNCTION</scope>
    <scope>SUBCELLULAR LOCATION</scope>
    <scope>MASS SPECTROMETRY</scope>
    <source>
        <tissue>Venom</tissue>
    </source>
</reference>
<reference key="3">
    <citation type="journal article" date="2006" name="BMC Biotechnol.">
        <title>A fusion protein containing a lepidopteran-specific toxin from the South Indian red scorpion (Mesobuthus tamulus) and snowdrop lectin shows oral toxicity to target insects.</title>
        <authorList>
            <person name="Pham Trung N."/>
            <person name="Fitches E."/>
            <person name="Gatehouse J.A."/>
        </authorList>
    </citation>
    <scope>BIOTECHNOLOGY</scope>
    <scope>RECOMBINANT EXPRESSION AS A CHIMERIC VARIANT</scope>
</reference>
<reference key="4">
    <citation type="journal article" date="2010" name="Pest Manag. Sci.">
        <title>Insecticidal activity of scorpion toxin (ButaIT) and snowdrop lectin (GNA) containing fusion proteins towards pest species of different orders.</title>
        <authorList>
            <person name="Fitches E.C."/>
            <person name="Bell H.A."/>
            <person name="Powell M.E."/>
            <person name="Back E."/>
            <person name="Sargiotti C."/>
            <person name="Weaver R.J."/>
            <person name="Gatehouse J.A."/>
        </authorList>
    </citation>
    <scope>BIOTECHNOLOGY</scope>
    <scope>RECOMBINANT EXPRESSION AS A CHIMERIC VARIANT</scope>
</reference>
<name>CTXL_HOTTA</name>
<proteinExistence type="evidence at protein level"/>
<feature type="signal peptide" evidence="4">
    <location>
        <begin position="1"/>
        <end position="24"/>
    </location>
</feature>
<feature type="chain" id="PRO_0000035331" description="Lepidopteran-selective toxin">
    <location>
        <begin position="25"/>
        <end position="61"/>
    </location>
</feature>
<feature type="propeptide" id="PRO_0000035332" evidence="6">
    <location>
        <position position="62"/>
    </location>
</feature>
<feature type="disulfide bond" evidence="1 3">
    <location>
        <begin position="26"/>
        <end position="43"/>
    </location>
</feature>
<feature type="disulfide bond" evidence="1 3">
    <location>
        <begin position="29"/>
        <end position="51"/>
    </location>
</feature>
<feature type="disulfide bond" evidence="1 3">
    <location>
        <begin position="40"/>
        <end position="56"/>
    </location>
</feature>
<feature type="disulfide bond" evidence="1 3">
    <location>
        <begin position="44"/>
        <end position="58"/>
    </location>
</feature>
<accession>P81761</accession>
<accession>Q8T0X4</accession>
<keyword id="KW-1265">Chloride channel impairing toxin</keyword>
<keyword id="KW-0903">Direct protein sequencing</keyword>
<keyword id="KW-1015">Disulfide bond</keyword>
<keyword id="KW-0872">Ion channel impairing toxin</keyword>
<keyword id="KW-0960">Knottin</keyword>
<keyword id="KW-0964">Secreted</keyword>
<keyword id="KW-0732">Signal</keyword>
<keyword id="KW-0800">Toxin</keyword>
<keyword id="KW-0870">Voltage-gated chloride channel impairing toxin</keyword>
<comment type="function">
    <text evidence="2 4">Toxin with unknown function in healthy organisms. On glioma cells, interacts with chloride channels (probably ClC-3/CLCN3) and MMP2 at the surface of glioma cells. This complex is then internalized via caveolae, thus inhibiting the chloride channels necessary for cell shrinkage and tumor propagation (By similarity). Induces flaccid paralysis in H.virescens larvae. Is not toxic to S.falculata larvae or mice.</text>
</comment>
<comment type="subcellular location">
    <subcellularLocation>
        <location evidence="4">Secreted</location>
    </subcellularLocation>
</comment>
<comment type="tissue specificity">
    <text evidence="7">Expressed by the venom gland.</text>
</comment>
<comment type="domain">
    <text evidence="1">The presence of a 'disulfide through disulfide knot' structurally defines this protein as a knottin.</text>
</comment>
<comment type="mass spectrometry"/>
<comment type="biotechnology">
    <text evidence="8">Could be considered as a biological insecticide candidate, when fused to Galanthus nivalis agglutinin (GNA), a protein with the potential to cross the insect gut. This chimeric ButaIT/GNA variant shows a gain in toxicity against insects when administered orally, while maintaining similar effects as the wild-type toxin when injected (toxic to insects and non-toxic to mammals).</text>
</comment>
<comment type="similarity">
    <text evidence="3">Belongs to the short scorpion toxin superfamily. Chloride channel inhibitor family.</text>
</comment>
<dbReference type="EMBL" id="AF481881">
    <property type="protein sequence ID" value="AAL87237.1"/>
    <property type="molecule type" value="mRNA"/>
</dbReference>
<dbReference type="SMR" id="P81761"/>
<dbReference type="GO" id="GO:0005576">
    <property type="term" value="C:extracellular region"/>
    <property type="evidence" value="ECO:0000314"/>
    <property type="project" value="UniProtKB"/>
</dbReference>
<dbReference type="GO" id="GO:0017081">
    <property type="term" value="F:chloride channel regulator activity"/>
    <property type="evidence" value="ECO:0007669"/>
    <property type="project" value="UniProtKB-KW"/>
</dbReference>
<dbReference type="GO" id="GO:0090729">
    <property type="term" value="F:toxin activity"/>
    <property type="evidence" value="ECO:0000314"/>
    <property type="project" value="UniProtKB"/>
</dbReference>
<dbReference type="GO" id="GO:0035738">
    <property type="term" value="P:venom-mediated perturbation of biological process"/>
    <property type="evidence" value="ECO:0000314"/>
    <property type="project" value="UniProtKB"/>
</dbReference>
<dbReference type="InterPro" id="IPR036574">
    <property type="entry name" value="Scorpion_toxin-like_sf"/>
</dbReference>
<dbReference type="InterPro" id="IPR007958">
    <property type="entry name" value="Scorpion_toxinS_Cl_inh"/>
</dbReference>
<dbReference type="Pfam" id="PF05294">
    <property type="entry name" value="Toxin_5"/>
    <property type="match status" value="1"/>
</dbReference>
<dbReference type="SUPFAM" id="SSF57095">
    <property type="entry name" value="Scorpion toxin-like"/>
    <property type="match status" value="1"/>
</dbReference>
<dbReference type="PROSITE" id="PS51200">
    <property type="entry name" value="SHORT_SCORPION_CHLORIDE"/>
    <property type="match status" value="1"/>
</dbReference>
<evidence type="ECO:0000250" key="1">
    <source>
        <dbReference type="UniProtKB" id="P15222"/>
    </source>
</evidence>
<evidence type="ECO:0000250" key="2">
    <source>
        <dbReference type="UniProtKB" id="Q9UAD0"/>
    </source>
</evidence>
<evidence type="ECO:0000255" key="3">
    <source>
        <dbReference type="PROSITE-ProRule" id="PRU00545"/>
    </source>
</evidence>
<evidence type="ECO:0000269" key="4">
    <source>
    </source>
</evidence>
<evidence type="ECO:0000303" key="5">
    <source>
    </source>
</evidence>
<evidence type="ECO:0000305" key="6"/>
<evidence type="ECO:0000305" key="7">
    <source>
    </source>
</evidence>
<evidence type="ECO:0000305" key="8">
    <source>
    </source>
</evidence>
<protein>
    <recommendedName>
        <fullName>Lepidopteran-selective toxin</fullName>
    </recommendedName>
    <alternativeName>
        <fullName>BTChl2</fullName>
    </alternativeName>
    <alternativeName>
        <fullName evidence="5">ButaIT</fullName>
    </alternativeName>
</protein>
<organism>
    <name type="scientific">Hottentotta tamulus</name>
    <name type="common">Eastern Indian scorpion</name>
    <name type="synonym">Mesobuthus tamulus</name>
    <dbReference type="NCBI Taxonomy" id="34647"/>
    <lineage>
        <taxon>Eukaryota</taxon>
        <taxon>Metazoa</taxon>
        <taxon>Ecdysozoa</taxon>
        <taxon>Arthropoda</taxon>
        <taxon>Chelicerata</taxon>
        <taxon>Arachnida</taxon>
        <taxon>Scorpiones</taxon>
        <taxon>Buthida</taxon>
        <taxon>Buthoidea</taxon>
        <taxon>Buthidae</taxon>
        <taxon>Mesobuthus</taxon>
    </lineage>
</organism>
<sequence>MKFLYGVILIALFLTVMTATLSEARCGPCFTTDPQTQAKCSECCGRKGGVCKGPQCICGIQY</sequence>